<sequence length="281" mass="33639">MAFSDLTSRTVRLYDNWIKDADPRVEDWLLMSSPLPQTIILGFYVYFVTSLGPKLMENRKPFELKKVMITYNFSIVLFSVYMFYEFIMSGWGTGYSFRCDIVDYSQSPTALRMVRTCWLYYFSKFIELLDTIFFILRKKNSQVTFLHVFHHTIMPWTWWFGVKFAAGGLGTFHAFLNTAVHVVMYSYYGLCALGPDYQKYLWWKKYLTSLQLIQFVLITIHISQFFFMEDCKYQFPVFQYIIMSYGCIFLLLFLHFWYRAYTKGQRLPKTVKHGICKNKDH</sequence>
<proteinExistence type="evidence at transcript level"/>
<accession>A0JNC4</accession>
<comment type="function">
    <text evidence="2">Catalyzes the first and rate-limiting reaction of the four reactions that constitute the long-chain fatty acids elongation cycle. This endoplasmic reticulum-bound enzymatic process allows the addition of 2 carbons to the chain of long- and very long-chain fatty acids (VLCFAs) per cycle. Condensing enzyme with higher activity toward C18 acyl-CoAs, especially C18:3(n-3) acyl-CoAs and C18:3(n-6)-CoAs. Also active toward C20:4-, C18:0-, C18:1-, C18:2- and C16:0-CoAs, and weakly toward C20:0-CoA. Little or no activity toward C22:0-, C24:0-, or C26:0-CoAs. May participate in the production of saturated and polyunsaturated VLCFAs of different chain lengths that are involved in multiple biological processes as precursors of membrane lipids and lipid mediators.</text>
</comment>
<comment type="catalytic activity">
    <reaction evidence="2">
        <text>a very-long-chain acyl-CoA + malonyl-CoA + H(+) = a very-long-chain 3-oxoacyl-CoA + CO2 + CoA</text>
        <dbReference type="Rhea" id="RHEA:32727"/>
        <dbReference type="ChEBI" id="CHEBI:15378"/>
        <dbReference type="ChEBI" id="CHEBI:16526"/>
        <dbReference type="ChEBI" id="CHEBI:57287"/>
        <dbReference type="ChEBI" id="CHEBI:57384"/>
        <dbReference type="ChEBI" id="CHEBI:90725"/>
        <dbReference type="ChEBI" id="CHEBI:90736"/>
        <dbReference type="EC" id="2.3.1.199"/>
    </reaction>
    <physiologicalReaction direction="left-to-right" evidence="1">
        <dbReference type="Rhea" id="RHEA:32728"/>
    </physiologicalReaction>
</comment>
<comment type="catalytic activity">
    <reaction evidence="1">
        <text>eicosanoyl-CoA + malonyl-CoA + H(+) = 3-oxodocosanoyl-CoA + CO2 + CoA</text>
        <dbReference type="Rhea" id="RHEA:35327"/>
        <dbReference type="ChEBI" id="CHEBI:15378"/>
        <dbReference type="ChEBI" id="CHEBI:16526"/>
        <dbReference type="ChEBI" id="CHEBI:57287"/>
        <dbReference type="ChEBI" id="CHEBI:57380"/>
        <dbReference type="ChEBI" id="CHEBI:57384"/>
        <dbReference type="ChEBI" id="CHEBI:71451"/>
    </reaction>
    <physiologicalReaction direction="left-to-right" evidence="1">
        <dbReference type="Rhea" id="RHEA:35328"/>
    </physiologicalReaction>
</comment>
<comment type="catalytic activity">
    <reaction evidence="1">
        <text>(5Z,8Z,11Z,14Z)-eicosatetraenoyl-CoA + malonyl-CoA + H(+) = (7Z,10Z,13Z,16Z)-3-oxodocosatetraenoyl-CoA + CO2 + CoA</text>
        <dbReference type="Rhea" id="RHEA:36475"/>
        <dbReference type="ChEBI" id="CHEBI:15378"/>
        <dbReference type="ChEBI" id="CHEBI:16526"/>
        <dbReference type="ChEBI" id="CHEBI:57287"/>
        <dbReference type="ChEBI" id="CHEBI:57368"/>
        <dbReference type="ChEBI" id="CHEBI:57384"/>
        <dbReference type="ChEBI" id="CHEBI:73852"/>
    </reaction>
    <physiologicalReaction direction="left-to-right" evidence="1">
        <dbReference type="Rhea" id="RHEA:36476"/>
    </physiologicalReaction>
</comment>
<comment type="catalytic activity">
    <reaction evidence="1">
        <text>(6Z,9Z,12Z)-octadecatrienoyl-CoA + malonyl-CoA + H(+) = (8Z,11Z,14Z)-3-oxoeicosatrienoyl-CoA + CO2 + CoA</text>
        <dbReference type="Rhea" id="RHEA:35379"/>
        <dbReference type="ChEBI" id="CHEBI:15378"/>
        <dbReference type="ChEBI" id="CHEBI:16526"/>
        <dbReference type="ChEBI" id="CHEBI:57287"/>
        <dbReference type="ChEBI" id="CHEBI:57363"/>
        <dbReference type="ChEBI" id="CHEBI:57384"/>
        <dbReference type="ChEBI" id="CHEBI:71481"/>
    </reaction>
    <physiologicalReaction direction="left-to-right" evidence="1">
        <dbReference type="Rhea" id="RHEA:35380"/>
    </physiologicalReaction>
</comment>
<comment type="catalytic activity">
    <reaction evidence="1">
        <text>(9Z,12Z)-octadecadienoyl-CoA + malonyl-CoA + H(+) = (11Z,14Z)-3-oxoicosa-11,14-dienoyl-CoA + CO2 + CoA</text>
        <dbReference type="Rhea" id="RHEA:36503"/>
        <dbReference type="ChEBI" id="CHEBI:15378"/>
        <dbReference type="ChEBI" id="CHEBI:16526"/>
        <dbReference type="ChEBI" id="CHEBI:57287"/>
        <dbReference type="ChEBI" id="CHEBI:57383"/>
        <dbReference type="ChEBI" id="CHEBI:57384"/>
        <dbReference type="ChEBI" id="CHEBI:74012"/>
    </reaction>
    <physiologicalReaction direction="left-to-right" evidence="1">
        <dbReference type="Rhea" id="RHEA:36504"/>
    </physiologicalReaction>
</comment>
<comment type="catalytic activity">
    <reaction evidence="1">
        <text>(9Z)-octadecenoyl-CoA + malonyl-CoA + H(+) = 3-oxo-(11Z)-eicosenoyl-CoA + CO2 + CoA</text>
        <dbReference type="Rhea" id="RHEA:36511"/>
        <dbReference type="ChEBI" id="CHEBI:15378"/>
        <dbReference type="ChEBI" id="CHEBI:16526"/>
        <dbReference type="ChEBI" id="CHEBI:57287"/>
        <dbReference type="ChEBI" id="CHEBI:57384"/>
        <dbReference type="ChEBI" id="CHEBI:57387"/>
        <dbReference type="ChEBI" id="CHEBI:74011"/>
    </reaction>
    <physiologicalReaction direction="left-to-right" evidence="1">
        <dbReference type="Rhea" id="RHEA:36512"/>
    </physiologicalReaction>
</comment>
<comment type="catalytic activity">
    <reaction evidence="1">
        <text>octadecanoyl-CoA + malonyl-CoA + H(+) = 3-oxoeicosanoyl-CoA + CO2 + CoA</text>
        <dbReference type="Rhea" id="RHEA:35319"/>
        <dbReference type="ChEBI" id="CHEBI:15378"/>
        <dbReference type="ChEBI" id="CHEBI:16526"/>
        <dbReference type="ChEBI" id="CHEBI:57287"/>
        <dbReference type="ChEBI" id="CHEBI:57384"/>
        <dbReference type="ChEBI" id="CHEBI:57394"/>
        <dbReference type="ChEBI" id="CHEBI:65115"/>
    </reaction>
    <physiologicalReaction direction="left-to-right" evidence="1">
        <dbReference type="Rhea" id="RHEA:35320"/>
    </physiologicalReaction>
</comment>
<comment type="catalytic activity">
    <reaction evidence="1">
        <text>hexadecanoyl-CoA + malonyl-CoA + H(+) = 3-oxooctadecanoyl-CoA + CO2 + CoA</text>
        <dbReference type="Rhea" id="RHEA:35315"/>
        <dbReference type="ChEBI" id="CHEBI:15378"/>
        <dbReference type="ChEBI" id="CHEBI:16526"/>
        <dbReference type="ChEBI" id="CHEBI:57287"/>
        <dbReference type="ChEBI" id="CHEBI:57379"/>
        <dbReference type="ChEBI" id="CHEBI:57384"/>
        <dbReference type="ChEBI" id="CHEBI:71407"/>
    </reaction>
    <physiologicalReaction direction="left-to-right" evidence="1">
        <dbReference type="Rhea" id="RHEA:35316"/>
    </physiologicalReaction>
</comment>
<comment type="catalytic activity">
    <reaction evidence="1">
        <text>(9Z,12Z,15Z)-octadecatrienoyl-CoA + malonyl-CoA + H(+) = (11Z,14Z,17Z)-3-oxoeicosatrienoyl-CoA + CO2 + CoA</text>
        <dbReference type="Rhea" id="RHEA:36523"/>
        <dbReference type="ChEBI" id="CHEBI:15378"/>
        <dbReference type="ChEBI" id="CHEBI:16526"/>
        <dbReference type="ChEBI" id="CHEBI:57287"/>
        <dbReference type="ChEBI" id="CHEBI:57384"/>
        <dbReference type="ChEBI" id="CHEBI:74034"/>
        <dbReference type="ChEBI" id="CHEBI:74054"/>
    </reaction>
    <physiologicalReaction direction="left-to-right" evidence="1">
        <dbReference type="Rhea" id="RHEA:36524"/>
    </physiologicalReaction>
</comment>
<comment type="pathway">
    <text evidence="2">Lipid metabolism; fatty acid biosynthesis.</text>
</comment>
<comment type="subunit">
    <text evidence="1">Homodimer. Interacts with TECR (By similarity).</text>
</comment>
<comment type="subcellular location">
    <subcellularLocation>
        <location evidence="2">Endoplasmic reticulum membrane</location>
        <topology evidence="2">Multi-pass membrane protein</topology>
    </subcellularLocation>
</comment>
<comment type="domain">
    <text evidence="2">The C-terminal di-lysine motif may confer endoplasmic reticulum localization.</text>
</comment>
<comment type="similarity">
    <text evidence="2">Belongs to the ELO family. ELOVL7 subfamily.</text>
</comment>
<protein>
    <recommendedName>
        <fullName evidence="2">Very long chain fatty acid elongase 7</fullName>
        <ecNumber evidence="1 2">2.3.1.199</ecNumber>
    </recommendedName>
    <alternativeName>
        <fullName evidence="2">3-keto acyl-CoA synthase ELOVL7</fullName>
    </alternativeName>
    <alternativeName>
        <fullName evidence="2">ELOVL fatty acid elongase 7</fullName>
        <shortName evidence="2">ELOVL FA elongase 7</shortName>
    </alternativeName>
    <alternativeName>
        <fullName evidence="2">Elongation of very long chain fatty acids protein 7</fullName>
    </alternativeName>
    <alternativeName>
        <fullName evidence="2">Very long chain 3-ketoacyl-CoA synthase 7</fullName>
    </alternativeName>
    <alternativeName>
        <fullName evidence="2">Very long chain 3-oxoacyl-CoA synthase 7</fullName>
    </alternativeName>
</protein>
<evidence type="ECO:0000250" key="1">
    <source>
        <dbReference type="UniProtKB" id="A1L3X0"/>
    </source>
</evidence>
<evidence type="ECO:0000255" key="2">
    <source>
        <dbReference type="HAMAP-Rule" id="MF_03207"/>
    </source>
</evidence>
<dbReference type="EC" id="2.3.1.199" evidence="1 2"/>
<dbReference type="EMBL" id="BC126611">
    <property type="protein sequence ID" value="AAI26612.1"/>
    <property type="molecule type" value="mRNA"/>
</dbReference>
<dbReference type="RefSeq" id="NP_001071510.1">
    <property type="nucleotide sequence ID" value="NM_001078042.1"/>
</dbReference>
<dbReference type="SMR" id="A0JNC4"/>
<dbReference type="FunCoup" id="A0JNC4">
    <property type="interactions" value="527"/>
</dbReference>
<dbReference type="STRING" id="9913.ENSBTAP00000060090"/>
<dbReference type="PaxDb" id="9913-ENSBTAP00000010129"/>
<dbReference type="Ensembl" id="ENSBTAT00000069161.1">
    <property type="protein sequence ID" value="ENSBTAP00000060090.1"/>
    <property type="gene ID" value="ENSBTAG00000007704.7"/>
</dbReference>
<dbReference type="GeneID" id="614096"/>
<dbReference type="KEGG" id="bta:614096"/>
<dbReference type="CTD" id="79993"/>
<dbReference type="VEuPathDB" id="HostDB:ENSBTAG00000007704"/>
<dbReference type="VGNC" id="VGNC:28453">
    <property type="gene designation" value="ELOVL7"/>
</dbReference>
<dbReference type="eggNOG" id="KOG3071">
    <property type="taxonomic scope" value="Eukaryota"/>
</dbReference>
<dbReference type="GeneTree" id="ENSGT01050000244838"/>
<dbReference type="HOGENOM" id="CLU_048483_0_0_1"/>
<dbReference type="InParanoid" id="A0JNC4"/>
<dbReference type="OMA" id="EFMQNAD"/>
<dbReference type="OrthoDB" id="434092at2759"/>
<dbReference type="Reactome" id="R-BTA-75876">
    <property type="pathway name" value="Synthesis of very long-chain fatty acyl-CoAs"/>
</dbReference>
<dbReference type="UniPathway" id="UPA00094"/>
<dbReference type="Proteomes" id="UP000009136">
    <property type="component" value="Chromosome 20"/>
</dbReference>
<dbReference type="Bgee" id="ENSBTAG00000007704">
    <property type="expression patterns" value="Expressed in thyroid gland and 97 other cell types or tissues"/>
</dbReference>
<dbReference type="GO" id="GO:0005783">
    <property type="term" value="C:endoplasmic reticulum"/>
    <property type="evidence" value="ECO:0000250"/>
    <property type="project" value="UniProtKB"/>
</dbReference>
<dbReference type="GO" id="GO:0005789">
    <property type="term" value="C:endoplasmic reticulum membrane"/>
    <property type="evidence" value="ECO:0000318"/>
    <property type="project" value="GO_Central"/>
</dbReference>
<dbReference type="GO" id="GO:0009922">
    <property type="term" value="F:fatty acid elongase activity"/>
    <property type="evidence" value="ECO:0000318"/>
    <property type="project" value="GO_Central"/>
</dbReference>
<dbReference type="GO" id="GO:0034625">
    <property type="term" value="P:fatty acid elongation, monounsaturated fatty acid"/>
    <property type="evidence" value="ECO:0000318"/>
    <property type="project" value="GO_Central"/>
</dbReference>
<dbReference type="GO" id="GO:0034626">
    <property type="term" value="P:fatty acid elongation, polyunsaturated fatty acid"/>
    <property type="evidence" value="ECO:0000318"/>
    <property type="project" value="GO_Central"/>
</dbReference>
<dbReference type="GO" id="GO:0019367">
    <property type="term" value="P:fatty acid elongation, saturated fatty acid"/>
    <property type="evidence" value="ECO:0000250"/>
    <property type="project" value="UniProtKB"/>
</dbReference>
<dbReference type="GO" id="GO:0035338">
    <property type="term" value="P:long-chain fatty-acyl-CoA biosynthetic process"/>
    <property type="evidence" value="ECO:0007669"/>
    <property type="project" value="UniProtKB-UniRule"/>
</dbReference>
<dbReference type="GO" id="GO:0030148">
    <property type="term" value="P:sphingolipid biosynthetic process"/>
    <property type="evidence" value="ECO:0000318"/>
    <property type="project" value="GO_Central"/>
</dbReference>
<dbReference type="GO" id="GO:0006636">
    <property type="term" value="P:unsaturated fatty acid biosynthetic process"/>
    <property type="evidence" value="ECO:0007669"/>
    <property type="project" value="UniProtKB-UniRule"/>
</dbReference>
<dbReference type="GO" id="GO:0042761">
    <property type="term" value="P:very long-chain fatty acid biosynthetic process"/>
    <property type="evidence" value="ECO:0000250"/>
    <property type="project" value="UniProtKB"/>
</dbReference>
<dbReference type="HAMAP" id="MF_03207">
    <property type="entry name" value="VLCF_elongase_7"/>
    <property type="match status" value="1"/>
</dbReference>
<dbReference type="InterPro" id="IPR030457">
    <property type="entry name" value="ELO_CS"/>
</dbReference>
<dbReference type="InterPro" id="IPR002076">
    <property type="entry name" value="ELO_fam"/>
</dbReference>
<dbReference type="InterPro" id="IPR033670">
    <property type="entry name" value="ELOVL7"/>
</dbReference>
<dbReference type="PANTHER" id="PTHR11157:SF118">
    <property type="entry name" value="ELONGATION OF VERY LONG CHAIN FATTY ACIDS PROTEIN 7"/>
    <property type="match status" value="1"/>
</dbReference>
<dbReference type="PANTHER" id="PTHR11157">
    <property type="entry name" value="FATTY ACID ACYL TRANSFERASE-RELATED"/>
    <property type="match status" value="1"/>
</dbReference>
<dbReference type="Pfam" id="PF01151">
    <property type="entry name" value="ELO"/>
    <property type="match status" value="1"/>
</dbReference>
<dbReference type="PROSITE" id="PS01188">
    <property type="entry name" value="ELO"/>
    <property type="match status" value="1"/>
</dbReference>
<feature type="initiator methionine" description="Removed" evidence="1">
    <location>
        <position position="1"/>
    </location>
</feature>
<feature type="chain" id="PRO_0000311987" description="Very long chain fatty acid elongase 7">
    <location>
        <begin position="2"/>
        <end position="281"/>
    </location>
</feature>
<feature type="topological domain" description="Lumenal" evidence="1">
    <location>
        <begin position="2"/>
        <end position="27"/>
    </location>
</feature>
<feature type="transmembrane region" description="Helical; Name=1" evidence="2">
    <location>
        <begin position="28"/>
        <end position="48"/>
    </location>
</feature>
<feature type="topological domain" description="Cytoplasmic" evidence="1">
    <location>
        <begin position="49"/>
        <end position="66"/>
    </location>
</feature>
<feature type="transmembrane region" description="Helical; Name=2" evidence="2">
    <location>
        <begin position="67"/>
        <end position="87"/>
    </location>
</feature>
<feature type="topological domain" description="Lumenal" evidence="1">
    <location>
        <begin position="88"/>
        <end position="115"/>
    </location>
</feature>
<feature type="transmembrane region" description="Helical; Name=3" evidence="2">
    <location>
        <begin position="116"/>
        <end position="136"/>
    </location>
</feature>
<feature type="topological domain" description="Cytoplasmic" evidence="1">
    <location>
        <begin position="137"/>
        <end position="142"/>
    </location>
</feature>
<feature type="transmembrane region" description="Helical; Name=4" evidence="2">
    <location>
        <begin position="143"/>
        <end position="162"/>
    </location>
</feature>
<feature type="topological domain" description="Lumenal" evidence="1">
    <location>
        <begin position="163"/>
        <end position="171"/>
    </location>
</feature>
<feature type="transmembrane region" description="Helical; Name=5" evidence="2">
    <location>
        <begin position="172"/>
        <end position="194"/>
    </location>
</feature>
<feature type="topological domain" description="Cytoplasmic" evidence="1">
    <location>
        <begin position="195"/>
        <end position="206"/>
    </location>
</feature>
<feature type="transmembrane region" description="Helical; Name=6" evidence="2">
    <location>
        <begin position="207"/>
        <end position="227"/>
    </location>
</feature>
<feature type="topological domain" description="Lumenal" evidence="1">
    <location>
        <begin position="228"/>
        <end position="236"/>
    </location>
</feature>
<feature type="transmembrane region" description="Helical; Name=7" evidence="2">
    <location>
        <begin position="237"/>
        <end position="257"/>
    </location>
</feature>
<feature type="topological domain" description="Cytoplasmic" evidence="1">
    <location>
        <begin position="258"/>
        <end position="281"/>
    </location>
</feature>
<feature type="short sequence motif" description="HxxHH motif" evidence="1">
    <location>
        <begin position="147"/>
        <end position="151"/>
    </location>
</feature>
<feature type="short sequence motif" description="Di-lysine motif" evidence="2">
    <location>
        <begin position="277"/>
        <end position="281"/>
    </location>
</feature>
<feature type="active site" description="Nucleophile" evidence="1">
    <location>
        <position position="150"/>
    </location>
</feature>
<feature type="binding site" evidence="1">
    <location>
        <position position="124"/>
    </location>
    <ligand>
        <name>3-oxoeicosanoyl-CoA</name>
        <dbReference type="ChEBI" id="CHEBI:65115"/>
    </ligand>
</feature>
<feature type="binding site" evidence="1">
    <location>
        <position position="137"/>
    </location>
    <ligand>
        <name>3-oxoeicosanoyl-CoA</name>
        <dbReference type="ChEBI" id="CHEBI:65115"/>
    </ligand>
</feature>
<feature type="binding site" evidence="1">
    <location>
        <position position="139"/>
    </location>
    <ligand>
        <name>3-oxoeicosanoyl-CoA</name>
        <dbReference type="ChEBI" id="CHEBI:65115"/>
    </ligand>
</feature>
<feature type="binding site" evidence="1">
    <location>
        <position position="142"/>
    </location>
    <ligand>
        <name>3-oxoeicosanoyl-CoA</name>
        <dbReference type="ChEBI" id="CHEBI:65115"/>
    </ligand>
</feature>
<feature type="binding site" evidence="1">
    <location>
        <position position="147"/>
    </location>
    <ligand>
        <name>3-oxoeicosanoyl-CoA</name>
        <dbReference type="ChEBI" id="CHEBI:65115"/>
    </ligand>
</feature>
<feature type="binding site" evidence="1">
    <location>
        <position position="187"/>
    </location>
    <ligand>
        <name>3-oxoeicosanoyl-CoA</name>
        <dbReference type="ChEBI" id="CHEBI:65115"/>
    </ligand>
</feature>
<feature type="binding site" evidence="1">
    <location>
        <position position="204"/>
    </location>
    <ligand>
        <name>3-oxoeicosanoyl-CoA</name>
        <dbReference type="ChEBI" id="CHEBI:65115"/>
    </ligand>
</feature>
<feature type="binding site" evidence="1">
    <location>
        <position position="208"/>
    </location>
    <ligand>
        <name>3-oxoeicosanoyl-CoA</name>
        <dbReference type="ChEBI" id="CHEBI:65115"/>
    </ligand>
</feature>
<feature type="binding site" evidence="1">
    <location>
        <position position="211"/>
    </location>
    <ligand>
        <name>3-oxoeicosanoyl-CoA</name>
        <dbReference type="ChEBI" id="CHEBI:65115"/>
    </ligand>
</feature>
<feature type="binding site" evidence="1">
    <location>
        <position position="266"/>
    </location>
    <ligand>
        <name>3-oxoeicosanoyl-CoA</name>
        <dbReference type="ChEBI" id="CHEBI:65115"/>
    </ligand>
</feature>
<feature type="modified residue" description="N-acetylalanine" evidence="1">
    <location>
        <position position="2"/>
    </location>
</feature>
<feature type="disulfide bond" evidence="1">
    <location>
        <begin position="99"/>
        <end position="231"/>
    </location>
</feature>
<name>ELOV7_BOVIN</name>
<reference key="1">
    <citation type="submission" date="2006-10" db="EMBL/GenBank/DDBJ databases">
        <authorList>
            <consortium name="NIH - Mammalian Gene Collection (MGC) project"/>
        </authorList>
    </citation>
    <scope>NUCLEOTIDE SEQUENCE [LARGE SCALE MRNA]</scope>
    <source>
        <strain>Hereford</strain>
        <tissue>Fetal muscle</tissue>
    </source>
</reference>
<gene>
    <name evidence="2" type="primary">ELOVL7</name>
</gene>
<organism>
    <name type="scientific">Bos taurus</name>
    <name type="common">Bovine</name>
    <dbReference type="NCBI Taxonomy" id="9913"/>
    <lineage>
        <taxon>Eukaryota</taxon>
        <taxon>Metazoa</taxon>
        <taxon>Chordata</taxon>
        <taxon>Craniata</taxon>
        <taxon>Vertebrata</taxon>
        <taxon>Euteleostomi</taxon>
        <taxon>Mammalia</taxon>
        <taxon>Eutheria</taxon>
        <taxon>Laurasiatheria</taxon>
        <taxon>Artiodactyla</taxon>
        <taxon>Ruminantia</taxon>
        <taxon>Pecora</taxon>
        <taxon>Bovidae</taxon>
        <taxon>Bovinae</taxon>
        <taxon>Bos</taxon>
    </lineage>
</organism>
<keyword id="KW-0007">Acetylation</keyword>
<keyword id="KW-1015">Disulfide bond</keyword>
<keyword id="KW-0256">Endoplasmic reticulum</keyword>
<keyword id="KW-0275">Fatty acid biosynthesis</keyword>
<keyword id="KW-0276">Fatty acid metabolism</keyword>
<keyword id="KW-0444">Lipid biosynthesis</keyword>
<keyword id="KW-0443">Lipid metabolism</keyword>
<keyword id="KW-0472">Membrane</keyword>
<keyword id="KW-1185">Reference proteome</keyword>
<keyword id="KW-0808">Transferase</keyword>
<keyword id="KW-0812">Transmembrane</keyword>
<keyword id="KW-1133">Transmembrane helix</keyword>